<protein>
    <recommendedName>
        <fullName>Uncharacterized chromosomal cassette SCCmec type IVc protein CR006</fullName>
    </recommendedName>
</protein>
<evidence type="ECO:0000255" key="1"/>
<proteinExistence type="predicted"/>
<name>YM4C6_STAAR</name>
<reference key="1">
    <citation type="journal article" date="2004" name="Proc. Natl. Acad. Sci. U.S.A.">
        <title>Complete genomes of two clinical Staphylococcus aureus strains: evidence for the rapid evolution of virulence and drug resistance.</title>
        <authorList>
            <person name="Holden M.T.G."/>
            <person name="Feil E.J."/>
            <person name="Lindsay J.A."/>
            <person name="Peacock S.J."/>
            <person name="Day N.P.J."/>
            <person name="Enright M.C."/>
            <person name="Foster T.J."/>
            <person name="Moore C.E."/>
            <person name="Hurst L."/>
            <person name="Atkin R."/>
            <person name="Barron A."/>
            <person name="Bason N."/>
            <person name="Bentley S.D."/>
            <person name="Chillingworth C."/>
            <person name="Chillingworth T."/>
            <person name="Churcher C."/>
            <person name="Clark L."/>
            <person name="Corton C."/>
            <person name="Cronin A."/>
            <person name="Doggett J."/>
            <person name="Dowd L."/>
            <person name="Feltwell T."/>
            <person name="Hance Z."/>
            <person name="Harris B."/>
            <person name="Hauser H."/>
            <person name="Holroyd S."/>
            <person name="Jagels K."/>
            <person name="James K.D."/>
            <person name="Lennard N."/>
            <person name="Line A."/>
            <person name="Mayes R."/>
            <person name="Moule S."/>
            <person name="Mungall K."/>
            <person name="Ormond D."/>
            <person name="Quail M.A."/>
            <person name="Rabbinowitsch E."/>
            <person name="Rutherford K.M."/>
            <person name="Sanders M."/>
            <person name="Sharp S."/>
            <person name="Simmonds M."/>
            <person name="Stevens K."/>
            <person name="Whitehead S."/>
            <person name="Barrell B.G."/>
            <person name="Spratt B.G."/>
            <person name="Parkhill J."/>
        </authorList>
    </citation>
    <scope>NUCLEOTIDE SEQUENCE [LARGE SCALE GENOMIC DNA]</scope>
    <source>
        <strain>MRSA252</strain>
    </source>
</reference>
<feature type="chain" id="PRO_0000224931" description="Uncharacterized chromosomal cassette SCCmec type IVc protein CR006">
    <location>
        <begin position="1"/>
        <end position="706"/>
    </location>
</feature>
<feature type="coiled-coil region" evidence="1">
    <location>
        <begin position="86"/>
        <end position="162"/>
    </location>
</feature>
<feature type="coiled-coil region" evidence="1">
    <location>
        <begin position="269"/>
        <end position="299"/>
    </location>
</feature>
<feature type="coiled-coil region" evidence="1">
    <location>
        <begin position="337"/>
        <end position="427"/>
    </location>
</feature>
<organism>
    <name type="scientific">Staphylococcus aureus (strain MRSA252)</name>
    <dbReference type="NCBI Taxonomy" id="282458"/>
    <lineage>
        <taxon>Bacteria</taxon>
        <taxon>Bacillati</taxon>
        <taxon>Bacillota</taxon>
        <taxon>Bacilli</taxon>
        <taxon>Bacillales</taxon>
        <taxon>Staphylococcaceae</taxon>
        <taxon>Staphylococcus</taxon>
    </lineage>
</organism>
<keyword id="KW-0175">Coiled coil</keyword>
<dbReference type="EMBL" id="BX571856">
    <property type="protein sequence ID" value="CAG39107.1"/>
    <property type="molecule type" value="Genomic_DNA"/>
</dbReference>
<dbReference type="RefSeq" id="WP_000891228.1">
    <property type="nucleotide sequence ID" value="NC_002952.2"/>
</dbReference>
<dbReference type="KEGG" id="sar:SAR0080"/>
<dbReference type="HOGENOM" id="CLU_386258_0_0_9"/>
<dbReference type="Proteomes" id="UP000000596">
    <property type="component" value="Chromosome"/>
</dbReference>
<dbReference type="Gene3D" id="3.40.50.300">
    <property type="entry name" value="P-loop containing nucleotide triphosphate hydrolases"/>
    <property type="match status" value="2"/>
</dbReference>
<dbReference type="InterPro" id="IPR026866">
    <property type="entry name" value="CR006_AAA"/>
</dbReference>
<dbReference type="InterPro" id="IPR027417">
    <property type="entry name" value="P-loop_NTPase"/>
</dbReference>
<dbReference type="Pfam" id="PF13166">
    <property type="entry name" value="AAA_13"/>
    <property type="match status" value="1"/>
</dbReference>
<dbReference type="SUPFAM" id="SSF52540">
    <property type="entry name" value="P-loop containing nucleoside triphosphate hydrolases"/>
    <property type="match status" value="1"/>
</dbReference>
<accession>Q6GKM5</accession>
<gene>
    <name type="ordered locus">SAR0080</name>
</gene>
<sequence>MLELITDFSKKSFKNYSMKEELKFNAINIIYGVNGRGKTSLARGIKEIIEENNPDSLRYFYTDYIHELLLLEDSNKFKGVKATFGTKNVEIENKIIKLKNEVVDMTDTKKLLVEKRRKLRELINEIHKSRKGNLKIPLKSSNKSIEEVIAIYEKNLKDAKKIEHNIESIRNFVANDETLYNKYNSIYEVMIPSLKIETYDVDRLTKILQNNYTDIKIPSFEVIDWLRNGLELHNVEESICKFCGNNLNYNLIKEKIEIYLLNEKKKDFDYLKDVEKSIEQLSDNYEQYLSNIDIFVNELGVQKSVEESLGDSIDEIKRILKQKLGNMENDNLKFPSDDYITLISRLSEIEEECKEKKKIKLKELNKKTENINVIVTGSISLEILENQSIREELSSIQYEENECKKQEQLNEEINAKISKLHENQSDYNDFKIYLNGVFESINLHIRLKSDETTQNYYLYHDLENISLNIKDISEGEKNLIAFLFFYFELFEDEKQETIKSNIKTLIIDDPINSFDEANRFYVLELIKKVLKSKFNQIFIFTHSWNDFCDITYRLKGEDHNFYEVYKDHQGTSFLEKFKKVKTPYKKLFQEIYELSRKSQKDIVEEDCYYYHSINSIRRVFEEFLSFKLKNSDLAQKSNQPEIEEVYRKMTGNEMSNNKKIKLGSFLTIINVLSHKPYRAIDVIGSAKFLMRYIEDVDKAHYDAMKD</sequence>